<sequence>MKFASEFRDPALAKGLLAEIARLADQIGATAEKPVHIMEICGGHTHSIFRYGLDKLIHPGIEFIHGPGCPVCVLPRARVDECIEIAGRPEVIFCTFGDAMRVPGSKLSLMQAKAAGADIRMVYSPLDALELARRNPGREVVFFGLGFETTTPSTALAIQQAAREGLANFSVFCNHITVPEPIRALLDDPYMRLDGFIGPGHVSMVIGIHPYDFIAEDYGKPLVVAGFEPTDLLQSVLMVLRQISQGRAAIENQYARVVPEHGNRVSLAAIADVYERRPSFEWRGLGEIDASGLRIRAAYRAHDAEEKFGVGYAGQRAAVEEAEGCACGAVMTGRMKPVACAQFGKGCTPEMPLGALMVSSEGACAAYWQYGGARAAE</sequence>
<accession>P26411</accession>
<name>HYPD_RHOCA</name>
<dbReference type="EMBL" id="X61007">
    <property type="protein sequence ID" value="CAA43328.1"/>
    <property type="status" value="ALT_INIT"/>
    <property type="molecule type" value="Genomic_DNA"/>
</dbReference>
<dbReference type="PIR" id="S59984">
    <property type="entry name" value="S59984"/>
</dbReference>
<dbReference type="RefSeq" id="WP_013066524.1">
    <property type="nucleotide sequence ID" value="NZ_JAOTPJ010000016.1"/>
</dbReference>
<dbReference type="SMR" id="P26411"/>
<dbReference type="GeneID" id="31489722"/>
<dbReference type="OMA" id="FICPGHV"/>
<dbReference type="UniPathway" id="UPA00335"/>
<dbReference type="GO" id="GO:0051539">
    <property type="term" value="F:4 iron, 4 sulfur cluster binding"/>
    <property type="evidence" value="ECO:0007669"/>
    <property type="project" value="UniProtKB-KW"/>
</dbReference>
<dbReference type="GO" id="GO:0070025">
    <property type="term" value="F:carbon monoxide binding"/>
    <property type="evidence" value="ECO:0007669"/>
    <property type="project" value="TreeGrafter"/>
</dbReference>
<dbReference type="GO" id="GO:0005506">
    <property type="term" value="F:iron ion binding"/>
    <property type="evidence" value="ECO:0007669"/>
    <property type="project" value="TreeGrafter"/>
</dbReference>
<dbReference type="GO" id="GO:0051604">
    <property type="term" value="P:protein maturation"/>
    <property type="evidence" value="ECO:0007669"/>
    <property type="project" value="TreeGrafter"/>
</dbReference>
<dbReference type="Gene3D" id="6.10.20.100">
    <property type="match status" value="1"/>
</dbReference>
<dbReference type="Gene3D" id="3.40.50.11750">
    <property type="entry name" value="HypD, alpha/beta domain 1"/>
    <property type="match status" value="2"/>
</dbReference>
<dbReference type="InterPro" id="IPR002780">
    <property type="entry name" value="Hyd_form_HypD"/>
</dbReference>
<dbReference type="InterPro" id="IPR042243">
    <property type="entry name" value="HypD_1"/>
</dbReference>
<dbReference type="InterPro" id="IPR042244">
    <property type="entry name" value="HypD_2_sf"/>
</dbReference>
<dbReference type="NCBIfam" id="TIGR00075">
    <property type="entry name" value="hypD"/>
    <property type="match status" value="1"/>
</dbReference>
<dbReference type="PANTHER" id="PTHR30149:SF0">
    <property type="entry name" value="HYDROGENASE MATURATION FACTOR HYPD"/>
    <property type="match status" value="1"/>
</dbReference>
<dbReference type="PANTHER" id="PTHR30149">
    <property type="entry name" value="HYDROGENASE PROTEIN ASSEMBLY PROTEIN HYPD"/>
    <property type="match status" value="1"/>
</dbReference>
<dbReference type="Pfam" id="PF01924">
    <property type="entry name" value="HypD"/>
    <property type="match status" value="1"/>
</dbReference>
<dbReference type="PIRSF" id="PIRSF005622">
    <property type="entry name" value="Hydrgn_mat_hypD"/>
    <property type="match status" value="1"/>
</dbReference>
<organism>
    <name type="scientific">Rhodobacter capsulatus</name>
    <name type="common">Rhodopseudomonas capsulata</name>
    <dbReference type="NCBI Taxonomy" id="1061"/>
    <lineage>
        <taxon>Bacteria</taxon>
        <taxon>Pseudomonadati</taxon>
        <taxon>Pseudomonadota</taxon>
        <taxon>Alphaproteobacteria</taxon>
        <taxon>Rhodobacterales</taxon>
        <taxon>Rhodobacter group</taxon>
        <taxon>Rhodobacter</taxon>
    </lineage>
</organism>
<feature type="chain" id="PRO_0000201453" description="Hydrogenase maturation factor HypD">
    <location>
        <begin position="1"/>
        <end position="377"/>
    </location>
</feature>
<feature type="binding site" evidence="1">
    <location>
        <position position="41"/>
    </location>
    <ligand>
        <name>Fe cation</name>
        <dbReference type="ChEBI" id="CHEBI:24875"/>
    </ligand>
</feature>
<feature type="binding site" evidence="1">
    <location>
        <position position="69"/>
    </location>
    <ligand>
        <name>Fe cation</name>
        <dbReference type="ChEBI" id="CHEBI:24875"/>
    </ligand>
</feature>
<feature type="binding site" evidence="1">
    <location>
        <position position="72"/>
    </location>
    <ligand>
        <name>Fe cation</name>
        <dbReference type="ChEBI" id="CHEBI:24875"/>
    </ligand>
</feature>
<feature type="mutagenesis site" description="In RCC12 mutant; results in loss of hydrogenase activity." evidence="2">
    <location>
        <begin position="346"/>
        <end position="362"/>
    </location>
</feature>
<reference key="1">
    <citation type="journal article" date="1993" name="Mol. Microbiol.">
        <title>Organization of the genes necessary for hydrogenase expression in Rhodobacter capsulatus. Sequence analysis and identification of two hyp regulatory mutants.</title>
        <authorList>
            <person name="Colbeau A."/>
            <person name="Richaud P."/>
            <person name="Toussaint B."/>
            <person name="Caballero F.J."/>
            <person name="Elster C."/>
            <person name="Delphin C."/>
            <person name="Smith R.L."/>
            <person name="Chabert J."/>
            <person name="Vignais P.M."/>
        </authorList>
    </citation>
    <scope>NUCLEOTIDE SEQUENCE [GENOMIC DNA]</scope>
    <scope>MUTAGENESIS OF 346-GLY--GLY-362</scope>
    <source>
        <strain>ATCC 33303 / B10</strain>
    </source>
</reference>
<comment type="function">
    <text evidence="1">Involved in the maturation of [NiFe] hydrogenases. Involved in the biosynthesis of the Fe(CN)(2)CO cofactor.</text>
</comment>
<comment type="cofactor">
    <cofactor evidence="1">
        <name>[4Fe-4S] cluster</name>
        <dbReference type="ChEBI" id="CHEBI:49883"/>
    </cofactor>
</comment>
<comment type="pathway">
    <text evidence="1">Protein modification; [NiFe] hydrogenase maturation.</text>
</comment>
<comment type="similarity">
    <text evidence="4">Belongs to the HypD family.</text>
</comment>
<comment type="sequence caution" evidence="4">
    <conflict type="erroneous initiation">
        <sequence resource="EMBL-CDS" id="CAA43328"/>
    </conflict>
</comment>
<keyword id="KW-0004">4Fe-4S</keyword>
<keyword id="KW-0408">Iron</keyword>
<keyword id="KW-0411">Iron-sulfur</keyword>
<keyword id="KW-0479">Metal-binding</keyword>
<gene>
    <name evidence="3" type="primary">hypD</name>
</gene>
<evidence type="ECO:0000250" key="1">
    <source>
        <dbReference type="UniProtKB" id="P24192"/>
    </source>
</evidence>
<evidence type="ECO:0000269" key="2">
    <source>
    </source>
</evidence>
<evidence type="ECO:0000303" key="3">
    <source>
    </source>
</evidence>
<evidence type="ECO:0000305" key="4"/>
<protein>
    <recommendedName>
        <fullName evidence="1">Hydrogenase maturation factor HypD</fullName>
    </recommendedName>
</protein>
<proteinExistence type="evidence at protein level"/>